<dbReference type="EMBL" id="AP009371">
    <property type="protein sequence ID" value="BAF50233.1"/>
    <property type="molecule type" value="Genomic_DNA"/>
</dbReference>
<dbReference type="RefSeq" id="YP_001123409.1">
    <property type="nucleotide sequence ID" value="NC_009270.1"/>
</dbReference>
<dbReference type="SMR" id="A4QKM8"/>
<dbReference type="GeneID" id="4961691"/>
<dbReference type="GO" id="GO:0009507">
    <property type="term" value="C:chloroplast"/>
    <property type="evidence" value="ECO:0007669"/>
    <property type="project" value="UniProtKB-SubCell"/>
</dbReference>
<dbReference type="GO" id="GO:0022625">
    <property type="term" value="C:cytosolic large ribosomal subunit"/>
    <property type="evidence" value="ECO:0007669"/>
    <property type="project" value="TreeGrafter"/>
</dbReference>
<dbReference type="GO" id="GO:0070180">
    <property type="term" value="F:large ribosomal subunit rRNA binding"/>
    <property type="evidence" value="ECO:0007669"/>
    <property type="project" value="TreeGrafter"/>
</dbReference>
<dbReference type="GO" id="GO:0003735">
    <property type="term" value="F:structural constituent of ribosome"/>
    <property type="evidence" value="ECO:0007669"/>
    <property type="project" value="InterPro"/>
</dbReference>
<dbReference type="GO" id="GO:0006412">
    <property type="term" value="P:translation"/>
    <property type="evidence" value="ECO:0007669"/>
    <property type="project" value="UniProtKB-UniRule"/>
</dbReference>
<dbReference type="CDD" id="cd00337">
    <property type="entry name" value="Ribosomal_uL14"/>
    <property type="match status" value="1"/>
</dbReference>
<dbReference type="FunFam" id="2.40.150.20:FF:000002">
    <property type="entry name" value="50S ribosomal protein L14, chloroplastic"/>
    <property type="match status" value="1"/>
</dbReference>
<dbReference type="Gene3D" id="2.40.150.20">
    <property type="entry name" value="Ribosomal protein L14"/>
    <property type="match status" value="1"/>
</dbReference>
<dbReference type="HAMAP" id="MF_01367">
    <property type="entry name" value="Ribosomal_uL14"/>
    <property type="match status" value="1"/>
</dbReference>
<dbReference type="InterPro" id="IPR000218">
    <property type="entry name" value="Ribosomal_uL14"/>
</dbReference>
<dbReference type="InterPro" id="IPR005745">
    <property type="entry name" value="Ribosomal_uL14_bac-type"/>
</dbReference>
<dbReference type="InterPro" id="IPR019972">
    <property type="entry name" value="Ribosomal_uL14_CS"/>
</dbReference>
<dbReference type="InterPro" id="IPR036853">
    <property type="entry name" value="Ribosomal_uL14_sf"/>
</dbReference>
<dbReference type="NCBIfam" id="TIGR01067">
    <property type="entry name" value="rplN_bact"/>
    <property type="match status" value="1"/>
</dbReference>
<dbReference type="PANTHER" id="PTHR11761">
    <property type="entry name" value="50S/60S RIBOSOMAL PROTEIN L14/L23"/>
    <property type="match status" value="1"/>
</dbReference>
<dbReference type="PANTHER" id="PTHR11761:SF3">
    <property type="entry name" value="LARGE RIBOSOMAL SUBUNIT PROTEIN UL14M"/>
    <property type="match status" value="1"/>
</dbReference>
<dbReference type="Pfam" id="PF00238">
    <property type="entry name" value="Ribosomal_L14"/>
    <property type="match status" value="1"/>
</dbReference>
<dbReference type="SMART" id="SM01374">
    <property type="entry name" value="Ribosomal_L14"/>
    <property type="match status" value="1"/>
</dbReference>
<dbReference type="SUPFAM" id="SSF50193">
    <property type="entry name" value="Ribosomal protein L14"/>
    <property type="match status" value="1"/>
</dbReference>
<dbReference type="PROSITE" id="PS00049">
    <property type="entry name" value="RIBOSOMAL_L14"/>
    <property type="match status" value="1"/>
</dbReference>
<organism>
    <name type="scientific">Capsella bursa-pastoris</name>
    <name type="common">Shepherd's purse</name>
    <name type="synonym">Thlaspi bursa-pastoris</name>
    <dbReference type="NCBI Taxonomy" id="3719"/>
    <lineage>
        <taxon>Eukaryota</taxon>
        <taxon>Viridiplantae</taxon>
        <taxon>Streptophyta</taxon>
        <taxon>Embryophyta</taxon>
        <taxon>Tracheophyta</taxon>
        <taxon>Spermatophyta</taxon>
        <taxon>Magnoliopsida</taxon>
        <taxon>eudicotyledons</taxon>
        <taxon>Gunneridae</taxon>
        <taxon>Pentapetalae</taxon>
        <taxon>rosids</taxon>
        <taxon>malvids</taxon>
        <taxon>Brassicales</taxon>
        <taxon>Brassicaceae</taxon>
        <taxon>Camelineae</taxon>
        <taxon>Capsella</taxon>
    </lineage>
</organism>
<name>RK14_CAPBU</name>
<gene>
    <name evidence="1" type="primary">rpl14</name>
</gene>
<accession>A4QKM8</accession>
<comment type="function">
    <text evidence="1">Binds to 23S rRNA.</text>
</comment>
<comment type="subunit">
    <text evidence="1">Part of the 50S ribosomal subunit.</text>
</comment>
<comment type="subcellular location">
    <subcellularLocation>
        <location>Plastid</location>
        <location>Chloroplast</location>
    </subcellularLocation>
</comment>
<comment type="similarity">
    <text evidence="1">Belongs to the universal ribosomal protein uL14 family.</text>
</comment>
<keyword id="KW-0150">Chloroplast</keyword>
<keyword id="KW-0934">Plastid</keyword>
<keyword id="KW-0687">Ribonucleoprotein</keyword>
<keyword id="KW-0689">Ribosomal protein</keyword>
<keyword id="KW-0694">RNA-binding</keyword>
<keyword id="KW-0699">rRNA-binding</keyword>
<proteinExistence type="inferred from homology"/>
<geneLocation type="chloroplast"/>
<sequence length="122" mass="13581">MIQPQTYLNVADNSGARKLMCIRIIGASNRRYAHIGDVIVAVIKEAIPNTPLERSEVIRAVIVRTCKELKRNNGTIIRYDDNAAVVIDQEGNPKGTRVFGAIPRELRQLNFTKIVSLAPEVL</sequence>
<evidence type="ECO:0000255" key="1">
    <source>
        <dbReference type="HAMAP-Rule" id="MF_01367"/>
    </source>
</evidence>
<evidence type="ECO:0000305" key="2"/>
<reference key="1">
    <citation type="submission" date="2007-03" db="EMBL/GenBank/DDBJ databases">
        <title>Sequencing analysis of Capsella bursa-pastoris JO22 chloroplast DNA.</title>
        <authorList>
            <person name="Hosouchi T."/>
            <person name="Tsuruoka H."/>
            <person name="Kotani H."/>
        </authorList>
    </citation>
    <scope>NUCLEOTIDE SEQUENCE [LARGE SCALE GENOMIC DNA]</scope>
</reference>
<protein>
    <recommendedName>
        <fullName evidence="1">Large ribosomal subunit protein uL14c</fullName>
    </recommendedName>
    <alternativeName>
        <fullName evidence="2">50S ribosomal protein L14, chloroplastic</fullName>
    </alternativeName>
</protein>
<feature type="chain" id="PRO_0000355864" description="Large ribosomal subunit protein uL14c">
    <location>
        <begin position="1"/>
        <end position="122"/>
    </location>
</feature>